<organism>
    <name type="scientific">Staphylococcus epidermidis (strain ATCC 12228 / FDA PCI 1200)</name>
    <dbReference type="NCBI Taxonomy" id="176280"/>
    <lineage>
        <taxon>Bacteria</taxon>
        <taxon>Bacillati</taxon>
        <taxon>Bacillota</taxon>
        <taxon>Bacilli</taxon>
        <taxon>Bacillales</taxon>
        <taxon>Staphylococcaceae</taxon>
        <taxon>Staphylococcus</taxon>
    </lineage>
</organism>
<protein>
    <recommendedName>
        <fullName>Uncharacterized protein SE_1560</fullName>
    </recommendedName>
</protein>
<name>Y1560_STAES</name>
<accession>Q8CRV8</accession>
<evidence type="ECO:0000255" key="1">
    <source>
        <dbReference type="PROSITE-ProRule" id="PRU00608"/>
    </source>
</evidence>
<evidence type="ECO:0000305" key="2"/>
<reference key="1">
    <citation type="journal article" date="2003" name="Mol. Microbiol.">
        <title>Genome-based analysis of virulence genes in a non-biofilm-forming Staphylococcus epidermidis strain (ATCC 12228).</title>
        <authorList>
            <person name="Zhang Y.-Q."/>
            <person name="Ren S.-X."/>
            <person name="Li H.-L."/>
            <person name="Wang Y.-X."/>
            <person name="Fu G."/>
            <person name="Yang J."/>
            <person name="Qin Z.-Q."/>
            <person name="Miao Y.-G."/>
            <person name="Wang W.-Y."/>
            <person name="Chen R.-S."/>
            <person name="Shen Y."/>
            <person name="Chen Z."/>
            <person name="Yuan Z.-H."/>
            <person name="Zhao G.-P."/>
            <person name="Qu D."/>
            <person name="Danchin A."/>
            <person name="Wen Y.-M."/>
        </authorList>
    </citation>
    <scope>NUCLEOTIDE SEQUENCE [LARGE SCALE GENOMIC DNA]</scope>
    <source>
        <strain>ATCC 12228 / FDA PCI 1200</strain>
    </source>
</reference>
<dbReference type="EMBL" id="AE015929">
    <property type="protein sequence ID" value="AAO05159.1"/>
    <property type="molecule type" value="Genomic_DNA"/>
</dbReference>
<dbReference type="RefSeq" id="NP_765115.1">
    <property type="nucleotide sequence ID" value="NC_004461.1"/>
</dbReference>
<dbReference type="RefSeq" id="WP_001830414.1">
    <property type="nucleotide sequence ID" value="NZ_WBME01000010.1"/>
</dbReference>
<dbReference type="SMR" id="Q8CRV8"/>
<dbReference type="MEROPS" id="C56.001"/>
<dbReference type="KEGG" id="sep:SE_1560"/>
<dbReference type="PATRIC" id="fig|176280.10.peg.1524"/>
<dbReference type="eggNOG" id="COG0693">
    <property type="taxonomic scope" value="Bacteria"/>
</dbReference>
<dbReference type="HOGENOM" id="CLU_000445_44_4_9"/>
<dbReference type="OrthoDB" id="9792284at2"/>
<dbReference type="Proteomes" id="UP000001411">
    <property type="component" value="Chromosome"/>
</dbReference>
<dbReference type="CDD" id="cd03134">
    <property type="entry name" value="GATase1_PfpI_like"/>
    <property type="match status" value="1"/>
</dbReference>
<dbReference type="Gene3D" id="3.40.50.880">
    <property type="match status" value="1"/>
</dbReference>
<dbReference type="InterPro" id="IPR006286">
    <property type="entry name" value="C56_PfpI-like"/>
</dbReference>
<dbReference type="InterPro" id="IPR029062">
    <property type="entry name" value="Class_I_gatase-like"/>
</dbReference>
<dbReference type="InterPro" id="IPR002818">
    <property type="entry name" value="DJ-1/PfpI"/>
</dbReference>
<dbReference type="NCBIfam" id="TIGR01382">
    <property type="entry name" value="PfpI"/>
    <property type="match status" value="1"/>
</dbReference>
<dbReference type="PANTHER" id="PTHR42733">
    <property type="entry name" value="DJ-1 PROTEIN"/>
    <property type="match status" value="1"/>
</dbReference>
<dbReference type="PANTHER" id="PTHR42733:SF2">
    <property type="entry name" value="DJ-1_THIJ_PFPI FAMILY PROTEIN"/>
    <property type="match status" value="1"/>
</dbReference>
<dbReference type="Pfam" id="PF01965">
    <property type="entry name" value="DJ-1_PfpI"/>
    <property type="match status" value="1"/>
</dbReference>
<dbReference type="SUPFAM" id="SSF52317">
    <property type="entry name" value="Class I glutamine amidotransferase-like"/>
    <property type="match status" value="1"/>
</dbReference>
<dbReference type="PROSITE" id="PS51276">
    <property type="entry name" value="PEPTIDASE_C56_PFPI"/>
    <property type="match status" value="1"/>
</dbReference>
<proteinExistence type="inferred from homology"/>
<feature type="chain" id="PRO_0000157841" description="Uncharacterized protein SE_1560">
    <location>
        <begin position="1"/>
        <end position="172"/>
    </location>
</feature>
<feature type="domain" description="PfpI endopeptidase" evidence="1">
    <location>
        <begin position="3"/>
        <end position="171"/>
    </location>
</feature>
<sequence>MAKKVAIILADEFEDIELTSPKEALENAGFETEVIGDTANHEVVGKHGEKVTVDVSIADAKPENYDALLIPGGFSPDHLRGDEEGRYGTFAKYFTKNDVPTFAICHGPLVLVDTDDLKGRTITGVINVRKDLSNAGANVVDESVVVDNNIVTSRVPDDLDDFNREIVKKLEA</sequence>
<comment type="similarity">
    <text evidence="2">Belongs to the peptidase C56 family.</text>
</comment>
<gene>
    <name type="ordered locus">SE_1560</name>
</gene>